<comment type="function">
    <text evidence="8">Component of the ribosome, a large ribonucleoprotein complex responsible for the synthesis of proteins in the cell. The small ribosomal subunit (SSU) binds messenger RNAs (mRNAs) and translates the encoded message by selecting cognate aminoacyl-transfer RNA (tRNA) molecules. The large subunit (LSU) contains the ribosomal catalytic site termed the peptidyl transferase center (PTC), which catalyzes the formation of peptide bonds, thereby polymerizing the amino acids delivered by tRNAs into a polypeptide chain. The nascent polypeptides leave the ribosome through a tunnel in the LSU and interact with protein factors that function in enzymatic processing, targeting, and the membrane insertion of nascent chains at the exit of the ribosomal tunnel.</text>
</comment>
<comment type="subunit">
    <text evidence="4 9">Component of the large ribosomal subunit (LSU). Mature yeast ribosomes consist of a small (40S) and a large (60S) subunit. The 40S small subunit contains 1 molecule of ribosomal RNA (18S rRNA) and 33 different proteins (encoded by 57 genes). The large 60S subunit contains 3 rRNA molecules (25S, 5.8S and 5S rRNA) and 46 different proteins (encoded by 81 genes) (PubMed:22096102, PubMed:9559554).</text>
</comment>
<comment type="subcellular location">
    <subcellularLocation>
        <location evidence="1 4">Cytoplasm</location>
    </subcellularLocation>
</comment>
<comment type="miscellaneous">
    <text evidence="2">Present with 33200 molecules/cell in log phase SD medium.</text>
</comment>
<comment type="miscellaneous">
    <text evidence="7">There are 2 genes for uL24 in yeast.</text>
</comment>
<comment type="similarity">
    <text evidence="7">Belongs to the universal ribosomal protein uL24 family.</text>
</comment>
<comment type="sequence caution" evidence="7">
    <conflict type="erroneous gene model prediction">
        <sequence resource="EMBL-CDS" id="AAZ22449"/>
    </conflict>
</comment>
<comment type="sequence caution" evidence="7">
    <conflict type="erroneous gene model prediction">
        <sequence resource="EMBL-CDS" id="CAA97022"/>
    </conflict>
</comment>
<feature type="initiator methionine" description="Removed" evidence="3">
    <location>
        <position position="1"/>
    </location>
</feature>
<feature type="chain" id="PRO_0000130802" description="Large ribosomal subunit protein uL24B">
    <location>
        <begin position="2"/>
        <end position="127"/>
    </location>
</feature>
<protein>
    <recommendedName>
        <fullName evidence="5">Large ribosomal subunit protein uL24B</fullName>
    </recommendedName>
    <alternativeName>
        <fullName evidence="6">60S ribosomal protein L26-B</fullName>
    </alternativeName>
    <alternativeName>
        <fullName>L33</fullName>
    </alternativeName>
    <alternativeName>
        <fullName>YL33</fullName>
    </alternativeName>
</protein>
<accession>P53221</accession>
<accession>D6VUH0</accession>
<accession>Q06HN2</accession>
<accession>Q45U50</accession>
<gene>
    <name evidence="6" type="primary">RPL26B</name>
    <name type="synonym">RPL33B</name>
    <name type="ordered locus">YGR034W</name>
</gene>
<name>RL26B_YEAST</name>
<sequence>MAKQSLDVSSDRRKARKAYFTAPSSERRVLLSAPLSKELRAQYGIKALPIRRDDEVLVVRGSKKGQEGKISSVYRLKFAVQVDKVTKEKVNGASVPINLHPSKLVITKLHLDKDRKALIQRKGGKLE</sequence>
<dbReference type="EMBL" id="DQ115390">
    <property type="protein sequence ID" value="AAZ22449.1"/>
    <property type="status" value="ALT_SEQ"/>
    <property type="molecule type" value="Genomic_DNA"/>
</dbReference>
<dbReference type="EMBL" id="Z72819">
    <property type="protein sequence ID" value="CAA97022.1"/>
    <property type="status" value="ALT_SEQ"/>
    <property type="molecule type" value="Genomic_DNA"/>
</dbReference>
<dbReference type="EMBL" id="DQ881451">
    <property type="protein sequence ID" value="ABI95878.1"/>
    <property type="molecule type" value="mRNA"/>
</dbReference>
<dbReference type="EMBL" id="BK006941">
    <property type="protein sequence ID" value="DAA08131.1"/>
    <property type="molecule type" value="Genomic_DNA"/>
</dbReference>
<dbReference type="PIR" id="S64325">
    <property type="entry name" value="S64325"/>
</dbReference>
<dbReference type="RefSeq" id="NP_011548.2">
    <property type="nucleotide sequence ID" value="NM_001181163.1"/>
</dbReference>
<dbReference type="SMR" id="P53221"/>
<dbReference type="BioGRID" id="33279">
    <property type="interactions" value="280"/>
</dbReference>
<dbReference type="ComplexPortal" id="CPX-1601">
    <property type="entry name" value="60S cytosolic large ribosomal subunit"/>
</dbReference>
<dbReference type="DIP" id="DIP-5757N"/>
<dbReference type="FunCoup" id="P53221">
    <property type="interactions" value="1133"/>
</dbReference>
<dbReference type="IntAct" id="P53221">
    <property type="interactions" value="121"/>
</dbReference>
<dbReference type="MINT" id="P53221"/>
<dbReference type="STRING" id="4932.YGR034W"/>
<dbReference type="iPTMnet" id="P53221"/>
<dbReference type="PaxDb" id="4932-YGR034W"/>
<dbReference type="PeptideAtlas" id="P53221"/>
<dbReference type="TopDownProteomics" id="P53221"/>
<dbReference type="EnsemblFungi" id="YGR034W_mRNA">
    <property type="protein sequence ID" value="YGR034W"/>
    <property type="gene ID" value="YGR034W"/>
</dbReference>
<dbReference type="GeneID" id="852922"/>
<dbReference type="KEGG" id="sce:YGR034W"/>
<dbReference type="AGR" id="SGD:S000003266"/>
<dbReference type="SGD" id="S000003266">
    <property type="gene designation" value="RPL26B"/>
</dbReference>
<dbReference type="VEuPathDB" id="FungiDB:YGR034W"/>
<dbReference type="eggNOG" id="KOG3401">
    <property type="taxonomic scope" value="Eukaryota"/>
</dbReference>
<dbReference type="GeneTree" id="ENSGT00390000014165"/>
<dbReference type="HOGENOM" id="CLU_093240_0_1_1"/>
<dbReference type="InParanoid" id="P53221"/>
<dbReference type="OMA" id="VRIMRGD"/>
<dbReference type="OrthoDB" id="1688503at2759"/>
<dbReference type="BioCyc" id="YEAST:G3O-30756-MONOMER"/>
<dbReference type="Reactome" id="R-SCE-156827">
    <property type="pathway name" value="L13a-mediated translational silencing of Ceruloplasmin expression"/>
</dbReference>
<dbReference type="Reactome" id="R-SCE-1799339">
    <property type="pathway name" value="SRP-dependent cotranslational protein targeting to membrane"/>
</dbReference>
<dbReference type="Reactome" id="R-SCE-72689">
    <property type="pathway name" value="Formation of a pool of free 40S subunits"/>
</dbReference>
<dbReference type="Reactome" id="R-SCE-72706">
    <property type="pathway name" value="GTP hydrolysis and joining of the 60S ribosomal subunit"/>
</dbReference>
<dbReference type="Reactome" id="R-SCE-975956">
    <property type="pathway name" value="Nonsense Mediated Decay (NMD) independent of the Exon Junction Complex (EJC)"/>
</dbReference>
<dbReference type="Reactome" id="R-SCE-975957">
    <property type="pathway name" value="Nonsense Mediated Decay (NMD) enhanced by the Exon Junction Complex (EJC)"/>
</dbReference>
<dbReference type="BioGRID-ORCS" id="852922">
    <property type="hits" value="2 hits in 10 CRISPR screens"/>
</dbReference>
<dbReference type="PRO" id="PR:P53221"/>
<dbReference type="Proteomes" id="UP000002311">
    <property type="component" value="Chromosome VII"/>
</dbReference>
<dbReference type="RNAct" id="P53221">
    <property type="molecule type" value="protein"/>
</dbReference>
<dbReference type="GO" id="GO:0005829">
    <property type="term" value="C:cytosol"/>
    <property type="evidence" value="ECO:0000304"/>
    <property type="project" value="Reactome"/>
</dbReference>
<dbReference type="GO" id="GO:0022625">
    <property type="term" value="C:cytosolic large ribosomal subunit"/>
    <property type="evidence" value="ECO:0000314"/>
    <property type="project" value="SGD"/>
</dbReference>
<dbReference type="GO" id="GO:0003723">
    <property type="term" value="F:RNA binding"/>
    <property type="evidence" value="ECO:0000314"/>
    <property type="project" value="SGD"/>
</dbReference>
<dbReference type="GO" id="GO:0003735">
    <property type="term" value="F:structural constituent of ribosome"/>
    <property type="evidence" value="ECO:0000314"/>
    <property type="project" value="SGD"/>
</dbReference>
<dbReference type="GO" id="GO:0002181">
    <property type="term" value="P:cytoplasmic translation"/>
    <property type="evidence" value="ECO:0000314"/>
    <property type="project" value="SGD"/>
</dbReference>
<dbReference type="GO" id="GO:0042273">
    <property type="term" value="P:ribosomal large subunit biogenesis"/>
    <property type="evidence" value="ECO:0000318"/>
    <property type="project" value="GO_Central"/>
</dbReference>
<dbReference type="CDD" id="cd06089">
    <property type="entry name" value="KOW_RPL26"/>
    <property type="match status" value="1"/>
</dbReference>
<dbReference type="FunFam" id="2.30.30.30:FF:000009">
    <property type="entry name" value="60S ribosomal protein L26"/>
    <property type="match status" value="1"/>
</dbReference>
<dbReference type="Gene3D" id="2.30.30.30">
    <property type="match status" value="1"/>
</dbReference>
<dbReference type="InterPro" id="IPR005824">
    <property type="entry name" value="KOW"/>
</dbReference>
<dbReference type="InterPro" id="IPR014722">
    <property type="entry name" value="Rib_uL2_dom2"/>
</dbReference>
<dbReference type="InterPro" id="IPR005825">
    <property type="entry name" value="Ribosomal_uL24_CS"/>
</dbReference>
<dbReference type="InterPro" id="IPR005756">
    <property type="entry name" value="Ribosomal_uL24_euk/arc"/>
</dbReference>
<dbReference type="InterPro" id="IPR041988">
    <property type="entry name" value="Ribosomal_uL24_KOW"/>
</dbReference>
<dbReference type="InterPro" id="IPR008991">
    <property type="entry name" value="Translation_prot_SH3-like_sf"/>
</dbReference>
<dbReference type="NCBIfam" id="TIGR01080">
    <property type="entry name" value="rplX_A_E"/>
    <property type="match status" value="1"/>
</dbReference>
<dbReference type="PANTHER" id="PTHR11143">
    <property type="entry name" value="60S RIBOSOMAL PROTEIN L26 FAMILY MEMBER"/>
    <property type="match status" value="1"/>
</dbReference>
<dbReference type="Pfam" id="PF00467">
    <property type="entry name" value="KOW"/>
    <property type="match status" value="1"/>
</dbReference>
<dbReference type="Pfam" id="PF16906">
    <property type="entry name" value="Ribosomal_L26"/>
    <property type="match status" value="1"/>
</dbReference>
<dbReference type="SUPFAM" id="SSF50104">
    <property type="entry name" value="Translation proteins SH3-like domain"/>
    <property type="match status" value="1"/>
</dbReference>
<dbReference type="PROSITE" id="PS01108">
    <property type="entry name" value="RIBOSOMAL_L24"/>
    <property type="match status" value="1"/>
</dbReference>
<evidence type="ECO:0000269" key="1">
    <source>
    </source>
</evidence>
<evidence type="ECO:0000269" key="2">
    <source>
    </source>
</evidence>
<evidence type="ECO:0000269" key="3">
    <source>
    </source>
</evidence>
<evidence type="ECO:0000269" key="4">
    <source>
    </source>
</evidence>
<evidence type="ECO:0000303" key="5">
    <source>
    </source>
</evidence>
<evidence type="ECO:0000303" key="6">
    <source>
    </source>
</evidence>
<evidence type="ECO:0000305" key="7"/>
<evidence type="ECO:0000305" key="8">
    <source>
    </source>
</evidence>
<evidence type="ECO:0000305" key="9">
    <source>
    </source>
</evidence>
<organism>
    <name type="scientific">Saccharomyces cerevisiae (strain ATCC 204508 / S288c)</name>
    <name type="common">Baker's yeast</name>
    <dbReference type="NCBI Taxonomy" id="559292"/>
    <lineage>
        <taxon>Eukaryota</taxon>
        <taxon>Fungi</taxon>
        <taxon>Dikarya</taxon>
        <taxon>Ascomycota</taxon>
        <taxon>Saccharomycotina</taxon>
        <taxon>Saccharomycetes</taxon>
        <taxon>Saccharomycetales</taxon>
        <taxon>Saccharomycetaceae</taxon>
        <taxon>Saccharomyces</taxon>
    </lineage>
</organism>
<proteinExistence type="evidence at protein level"/>
<keyword id="KW-0963">Cytoplasm</keyword>
<keyword id="KW-0903">Direct protein sequencing</keyword>
<keyword id="KW-1185">Reference proteome</keyword>
<keyword id="KW-0687">Ribonucleoprotein</keyword>
<keyword id="KW-0689">Ribosomal protein</keyword>
<reference key="1">
    <citation type="journal article" date="2005" name="Nat. Genet.">
        <title>Quantitative trait loci mapped to single-nucleotide resolution in yeast.</title>
        <authorList>
            <person name="Deutschbauer A.M."/>
            <person name="Davis R.W."/>
        </authorList>
    </citation>
    <scope>NUCLEOTIDE SEQUENCE [GENOMIC DNA]</scope>
    <source>
        <strain>SK1</strain>
    </source>
</reference>
<reference key="2">
    <citation type="journal article" date="1997" name="Yeast">
        <title>Sequence analysis of 203 kilobases from Saccharomyces cerevisiae chromosome VII.</title>
        <authorList>
            <person name="Rieger M."/>
            <person name="Brueckner M."/>
            <person name="Schaefer M."/>
            <person name="Mueller-Auer S."/>
        </authorList>
    </citation>
    <scope>NUCLEOTIDE SEQUENCE [GENOMIC DNA]</scope>
    <source>
        <strain>ATCC 204508 / S288c</strain>
    </source>
</reference>
<reference key="3">
    <citation type="journal article" date="1997" name="Nature">
        <title>The nucleotide sequence of Saccharomyces cerevisiae chromosome VII.</title>
        <authorList>
            <person name="Tettelin H."/>
            <person name="Agostoni-Carbone M.L."/>
            <person name="Albermann K."/>
            <person name="Albers M."/>
            <person name="Arroyo J."/>
            <person name="Backes U."/>
            <person name="Barreiros T."/>
            <person name="Bertani I."/>
            <person name="Bjourson A.J."/>
            <person name="Brueckner M."/>
            <person name="Bruschi C.V."/>
            <person name="Carignani G."/>
            <person name="Castagnoli L."/>
            <person name="Cerdan E."/>
            <person name="Clemente M.L."/>
            <person name="Coblenz A."/>
            <person name="Coglievina M."/>
            <person name="Coissac E."/>
            <person name="Defoor E."/>
            <person name="Del Bino S."/>
            <person name="Delius H."/>
            <person name="Delneri D."/>
            <person name="de Wergifosse P."/>
            <person name="Dujon B."/>
            <person name="Durand P."/>
            <person name="Entian K.-D."/>
            <person name="Eraso P."/>
            <person name="Escribano V."/>
            <person name="Fabiani L."/>
            <person name="Fartmann B."/>
            <person name="Feroli F."/>
            <person name="Feuermann M."/>
            <person name="Frontali L."/>
            <person name="Garcia-Gonzalez M."/>
            <person name="Garcia-Saez M.I."/>
            <person name="Goffeau A."/>
            <person name="Guerreiro P."/>
            <person name="Hani J."/>
            <person name="Hansen M."/>
            <person name="Hebling U."/>
            <person name="Hernandez K."/>
            <person name="Heumann K."/>
            <person name="Hilger F."/>
            <person name="Hofmann B."/>
            <person name="Indge K.J."/>
            <person name="James C.M."/>
            <person name="Klima R."/>
            <person name="Koetter P."/>
            <person name="Kramer B."/>
            <person name="Kramer W."/>
            <person name="Lauquin G."/>
            <person name="Leuther H."/>
            <person name="Louis E.J."/>
            <person name="Maillier E."/>
            <person name="Marconi A."/>
            <person name="Martegani E."/>
            <person name="Mazon M.J."/>
            <person name="Mazzoni C."/>
            <person name="McReynolds A.D.K."/>
            <person name="Melchioretto P."/>
            <person name="Mewes H.-W."/>
            <person name="Minenkova O."/>
            <person name="Mueller-Auer S."/>
            <person name="Nawrocki A."/>
            <person name="Netter P."/>
            <person name="Neu R."/>
            <person name="Nombela C."/>
            <person name="Oliver S.G."/>
            <person name="Panzeri L."/>
            <person name="Paoluzi S."/>
            <person name="Plevani P."/>
            <person name="Portetelle D."/>
            <person name="Portillo F."/>
            <person name="Potier S."/>
            <person name="Purnelle B."/>
            <person name="Rieger M."/>
            <person name="Riles L."/>
            <person name="Rinaldi T."/>
            <person name="Robben J."/>
            <person name="Rodrigues-Pousada C."/>
            <person name="Rodriguez-Belmonte E."/>
            <person name="Rodriguez-Torres A.M."/>
            <person name="Rose M."/>
            <person name="Ruzzi M."/>
            <person name="Saliola M."/>
            <person name="Sanchez-Perez M."/>
            <person name="Schaefer B."/>
            <person name="Schaefer M."/>
            <person name="Scharfe M."/>
            <person name="Schmidheini T."/>
            <person name="Schreer A."/>
            <person name="Skala J."/>
            <person name="Souciet J.-L."/>
            <person name="Steensma H.Y."/>
            <person name="Talla E."/>
            <person name="Thierry A."/>
            <person name="Vandenbol M."/>
            <person name="van der Aart Q.J.M."/>
            <person name="Van Dyck L."/>
            <person name="Vanoni M."/>
            <person name="Verhasselt P."/>
            <person name="Voet M."/>
            <person name="Volckaert G."/>
            <person name="Wambutt R."/>
            <person name="Watson M.D."/>
            <person name="Weber N."/>
            <person name="Wedler E."/>
            <person name="Wedler H."/>
            <person name="Wipfli P."/>
            <person name="Wolf K."/>
            <person name="Wright L.F."/>
            <person name="Zaccaria P."/>
            <person name="Zimmermann M."/>
            <person name="Zollner A."/>
            <person name="Kleine K."/>
        </authorList>
    </citation>
    <scope>NUCLEOTIDE SEQUENCE [LARGE SCALE GENOMIC DNA]</scope>
    <source>
        <strain>ATCC 204508 / S288c</strain>
    </source>
</reference>
<reference key="4">
    <citation type="journal article" date="2014" name="G3 (Bethesda)">
        <title>The reference genome sequence of Saccharomyces cerevisiae: Then and now.</title>
        <authorList>
            <person name="Engel S.R."/>
            <person name="Dietrich F.S."/>
            <person name="Fisk D.G."/>
            <person name="Binkley G."/>
            <person name="Balakrishnan R."/>
            <person name="Costanzo M.C."/>
            <person name="Dwight S.S."/>
            <person name="Hitz B.C."/>
            <person name="Karra K."/>
            <person name="Nash R.S."/>
            <person name="Weng S."/>
            <person name="Wong E.D."/>
            <person name="Lloyd P."/>
            <person name="Skrzypek M.S."/>
            <person name="Miyasato S.R."/>
            <person name="Simison M."/>
            <person name="Cherry J.M."/>
        </authorList>
    </citation>
    <scope>GENOME REANNOTATION</scope>
    <source>
        <strain>ATCC 204508 / S288c</strain>
    </source>
</reference>
<reference key="5">
    <citation type="journal article" date="2007" name="Genome Res.">
        <title>Genome-wide identification of spliced introns using a tiling microarray.</title>
        <authorList>
            <person name="Zhang Z."/>
            <person name="Hesselberth J.R."/>
            <person name="Fields S."/>
        </authorList>
    </citation>
    <scope>NUCLEOTIDE SEQUENCE [MRNA] OF 1-94</scope>
    <source>
        <strain>ATCC 201390 / BY4743</strain>
    </source>
</reference>
<reference key="6">
    <citation type="journal article" date="1984" name="Mol. Gen. Genet.">
        <title>Yeast ribosomal proteins. VIII. Isolation of two proteins and sequence characterization of twenty-four proteins from cytoplasmic ribosomes.</title>
        <authorList>
            <person name="Otaka E."/>
            <person name="Higo K."/>
            <person name="Itoh T."/>
        </authorList>
    </citation>
    <scope>PARTIAL PROTEIN SEQUENCE OF 2-41</scope>
    <scope>CLEAVAGE OF INITIATOR METHIONINE</scope>
</reference>
<reference key="7">
    <citation type="journal article" date="1998" name="Yeast">
        <title>The list of cytoplasmic ribosomal proteins of Saccharomyces cerevisiae.</title>
        <authorList>
            <person name="Planta R.J."/>
            <person name="Mager W.H."/>
        </authorList>
    </citation>
    <scope>NOMENCLATURE</scope>
    <scope>SUBUNIT</scope>
</reference>
<reference key="8">
    <citation type="journal article" date="2003" name="Nature">
        <title>Global analysis of protein localization in budding yeast.</title>
        <authorList>
            <person name="Huh W.-K."/>
            <person name="Falvo J.V."/>
            <person name="Gerke L.C."/>
            <person name="Carroll A.S."/>
            <person name="Howson R.W."/>
            <person name="Weissman J.S."/>
            <person name="O'Shea E.K."/>
        </authorList>
    </citation>
    <scope>SUBCELLULAR LOCATION [LARGE SCALE ANALYSIS]</scope>
</reference>
<reference key="9">
    <citation type="journal article" date="2003" name="Nature">
        <title>Global analysis of protein expression in yeast.</title>
        <authorList>
            <person name="Ghaemmaghami S."/>
            <person name="Huh W.-K."/>
            <person name="Bower K."/>
            <person name="Howson R.W."/>
            <person name="Belle A."/>
            <person name="Dephoure N."/>
            <person name="O'Shea E.K."/>
            <person name="Weissman J.S."/>
        </authorList>
    </citation>
    <scope>LEVEL OF PROTEIN EXPRESSION [LARGE SCALE ANALYSIS]</scope>
</reference>
<reference key="10">
    <citation type="journal article" date="2006" name="Proc. Natl. Acad. Sci. U.S.A.">
        <title>A large-scale full-length cDNA analysis to explore the budding yeast transcriptome.</title>
        <authorList>
            <person name="Miura F."/>
            <person name="Kawaguchi N."/>
            <person name="Sese J."/>
            <person name="Toyoda A."/>
            <person name="Hattori M."/>
            <person name="Morishita S."/>
            <person name="Ito T."/>
        </authorList>
    </citation>
    <scope>IDENTIFICATION OF INTRON</scope>
</reference>
<reference key="11">
    <citation type="journal article" date="2011" name="Science">
        <title>The structure of the eukaryotic ribosome at 3.0 A resolution.</title>
        <authorList>
            <person name="Ben-Shem A."/>
            <person name="Garreau de Loubresse N."/>
            <person name="Melnikov S."/>
            <person name="Jenner L."/>
            <person name="Yusupova G."/>
            <person name="Yusupov M."/>
        </authorList>
    </citation>
    <scope>SUBUNIT</scope>
    <scope>SUBCELLULAR LOCATION</scope>
</reference>
<reference key="12">
    <citation type="journal article" date="2014" name="Curr. Opin. Struct. Biol.">
        <title>A new system for naming ribosomal proteins.</title>
        <authorList>
            <person name="Ban N."/>
            <person name="Beckmann R."/>
            <person name="Cate J.H.D."/>
            <person name="Dinman J.D."/>
            <person name="Dragon F."/>
            <person name="Ellis S.R."/>
            <person name="Lafontaine D.L.J."/>
            <person name="Lindahl L."/>
            <person name="Liljas A."/>
            <person name="Lipton J.M."/>
            <person name="McAlear M.A."/>
            <person name="Moore P.B."/>
            <person name="Noller H.F."/>
            <person name="Ortega J."/>
            <person name="Panse V.G."/>
            <person name="Ramakrishnan V."/>
            <person name="Spahn C.M.T."/>
            <person name="Steitz T.A."/>
            <person name="Tchorzewski M."/>
            <person name="Tollervey D."/>
            <person name="Warren A.J."/>
            <person name="Williamson J.R."/>
            <person name="Wilson D."/>
            <person name="Yonath A."/>
            <person name="Yusupov M."/>
        </authorList>
    </citation>
    <scope>NOMENCLATURE</scope>
</reference>